<proteinExistence type="evidence at protein level"/>
<organism>
    <name type="scientific">Mus musculus</name>
    <name type="common">Mouse</name>
    <dbReference type="NCBI Taxonomy" id="10090"/>
    <lineage>
        <taxon>Eukaryota</taxon>
        <taxon>Metazoa</taxon>
        <taxon>Chordata</taxon>
        <taxon>Craniata</taxon>
        <taxon>Vertebrata</taxon>
        <taxon>Euteleostomi</taxon>
        <taxon>Mammalia</taxon>
        <taxon>Eutheria</taxon>
        <taxon>Euarchontoglires</taxon>
        <taxon>Glires</taxon>
        <taxon>Rodentia</taxon>
        <taxon>Myomorpha</taxon>
        <taxon>Muroidea</taxon>
        <taxon>Muridae</taxon>
        <taxon>Murinae</taxon>
        <taxon>Mus</taxon>
        <taxon>Mus</taxon>
    </lineage>
</organism>
<comment type="function">
    <text evidence="2 3 7 8 9 11 12">Selectively promotes the survival of dopaminergic neurons of the ventral mid-brain. Modulates GABAergic transmission to the dopaminergic neurons of the substantia nigra. Enhances spontaneous, as well as evoked, GABAergic inhibitory postsynaptic currents in dopaminergic neurons. Inhibits cell proliferation and endoplasmic reticulum (ER) stress-induced cell death. Retained in the ER/sarcoplasmic reticulum (SR) through association with the endoplasmic reticulum chaperone protein HSPA5 under normal conditions. Stabilizes HSPA5/BiP in its substrate-bound ADP state, which facilitates HSPA5/BiP incorporation into chaperone-client complexes during endoplasmic reticulum stress, its interaction with HSPA5/BiP inhibits ATP binding to HSPA5/BiP and subsequent nucleotide exchange (PubMed:30710085). As a result acts as a repressor of the unfolded protein response (UPR) pathway (PubMed:30710085). Up-regulated and secreted by the ER/SR in response to ER stress and hypoxia. Following secretion by the ER/SR, directly binds to 3-O-sulfogalactosylceramide, a lipid sulfatide in the outer cell membrane of target cells. Sulfatide binding promotes its cellular uptake by endocytosis, and is required for its role in alleviating ER stress and cell toxicity under hypoxic and ER stress conditions. Essential for embryonic lung development (PubMed:30543055). Required for the correct postnatal temporal and structural development of splenic white pulp (PubMed:38159526). Required for the repair-associated myeloid response in skeletal muscle, acts as a regulator of phenotypic transition towards prorepair macrophages in response to muscle injury and as a result limits excessive proinflammatory signaling (PubMed:37118549). Represses RELA expression and therefore NF-kB signaling in the myocardium, as a result limits macrophage infiltration of injured tissue and M1 macrophage differentiation in response to myocardial injury (PubMed:33939070). Required for endochondral ossification in long bones and the skull during postnatal development (PubMed:30543055).</text>
</comment>
<comment type="subunit">
    <text evidence="3 6 8">Interacts directly (via SAP domain) with HSPA5/BiP; the interaction inhibits ATP binding to HSPA5/BiP and subsequent nucleotide exchange (PubMed:30710085). Component of a complex containing at least CRELD2, MANF, MATN3 and PDIA4 (PubMed:23956175). Interacts (via C-terminus) with ERN1 (via luminal domain); the interaction is decreased in the presence of increasing concentrations of Ca(2+) (By similarity).</text>
</comment>
<comment type="subcellular location">
    <subcellularLocation>
        <location evidence="4 6 8">Secreted</location>
    </subcellularLocation>
    <subcellularLocation>
        <location evidence="6 10">Endoplasmic reticulum lumen</location>
    </subcellularLocation>
    <subcellularLocation>
        <location evidence="3">Sarcoplasmic reticulum lumen</location>
    </subcellularLocation>
    <text evidence="3">Retained in the endoplasmic reticulum (ER), and sarcoplasmic reticulum (SR) under normal conditions. Up-regulated and secreted by the ER/SR in response to ER stress and hypoxia.</text>
</comment>
<comment type="tissue specificity">
    <text evidence="4 6 7 11">Strongly expressed in pancreatic islets and spermatocytes (at protein level). Expressed in chondrocytes in cartilage (at protein level) (PubMed:23956175, PubMed:30543055). Expressed in prorepair macrophages in damaged skeletal muscles, expression decreases as animals age (at protein level) (PubMed:37118549).</text>
</comment>
<comment type="developmental stage">
    <text evidence="6">Expressed from birth.</text>
</comment>
<comment type="induction">
    <text evidence="4 11">Induced by endoplasmic reticulum (ER) stress (PubMed:17507765). Induced in prorepair macrophages in response to muscle injury, expression peaks 3-4 days post-injury followed by progressive decline to day 10 (PubMed:37118549). Young mice (2-6 months of age) show a significantly greater induction of expression compared to older mice (22-25 months of age) (PubMed:37118549).</text>
</comment>
<comment type="domain">
    <text evidence="1">The N-terminal region may be responsible for neurotrophic activity while the C-terminal region may play a role in the ER stress response.</text>
</comment>
<comment type="disruption phenotype">
    <text evidence="7 9 11 12">Homozygous knockout mice are embryonically lethal, embryos delivered by cesarean section show reduced alveolar volume and fail to initiate respiration (PubMed:30543055). In an inducible knockout model, young mice with induced muscle injury show reduced density and cross-sectional area of new myofibers formed at 4 days post injury (dpi) and persistent necrotic myofibers within the regenerating tissue (PubMed:37118549). Knockout in macrophages results in a decrease in muscle stem cells, and an imbalance in the macrophage population with a significant reduction in prorepair macrophages and a less significant reduction in proinflammatory macrophages in the regenerating muscle at 3 dpi, resulting in an imbalance of the macrophage population (PubMed:37118549). Structural differences are evident in prorepair macrophages, including a significant increase in size, accumulation of large vesicular structures filled with undigested cellular material and a 30% decrease in basal lysosomal hydrolytic activity (PubMed:37118549). Developmental delay of splenic white pulp at 1 week of age, this reduces white pulp areas with a smaller overall distribution and underdeveloped structures evident at 2 weeks of age, this persists at 6 weeks of age (PubMed:38159526). Conditional knockout in mono-macrophages results in a decreased survival rate and increased myocardial injury and inflammation in response to lipopolysaccharide (LPS)-induced myocardial injury (PubMed:33939070). Increase in CD68 positive M1 macrophages and an increase in CCL2 expression in LPS-induced myocarditis tissues (PubMed:33939070). Increase in RELA expression in myocardium both before and in response to LPS-induced myocarditis (PubMed:33939070). Conditional knockout in cartilage results in shorter long bones and reduced skull length at both 3 weeks and 9 weeks of age (PubMed:30543055). Decrease in chondrocyte proliferation and premature apoptosis of chondrocytes in the proliferating zone at the cartilage growth plate (PubMed:30543055).</text>
</comment>
<comment type="similarity">
    <text evidence="13">Belongs to the ARMET family.</text>
</comment>
<evidence type="ECO:0000250" key="1"/>
<evidence type="ECO:0000250" key="2">
    <source>
        <dbReference type="UniProtKB" id="P0C5H9"/>
    </source>
</evidence>
<evidence type="ECO:0000250" key="3">
    <source>
        <dbReference type="UniProtKB" id="P55145"/>
    </source>
</evidence>
<evidence type="ECO:0000269" key="4">
    <source>
    </source>
</evidence>
<evidence type="ECO:0000269" key="5">
    <source>
    </source>
</evidence>
<evidence type="ECO:0000269" key="6">
    <source>
    </source>
</evidence>
<evidence type="ECO:0000269" key="7">
    <source>
    </source>
</evidence>
<evidence type="ECO:0000269" key="8">
    <source>
    </source>
</evidence>
<evidence type="ECO:0000269" key="9">
    <source>
    </source>
</evidence>
<evidence type="ECO:0000269" key="10">
    <source>
    </source>
</evidence>
<evidence type="ECO:0000269" key="11">
    <source>
    </source>
</evidence>
<evidence type="ECO:0000269" key="12">
    <source>
    </source>
</evidence>
<evidence type="ECO:0000305" key="13"/>
<evidence type="ECO:0000312" key="14">
    <source>
        <dbReference type="MGI" id="MGI:1922090"/>
    </source>
</evidence>
<evidence type="ECO:0007744" key="15">
    <source>
        <dbReference type="PDB" id="2RQY"/>
    </source>
</evidence>
<evidence type="ECO:0007744" key="16">
    <source>
        <dbReference type="PDB" id="6H9U"/>
    </source>
</evidence>
<evidence type="ECO:0007744" key="17">
    <source>
        <dbReference type="PDB" id="6HA7"/>
    </source>
</evidence>
<evidence type="ECO:0007744" key="18">
    <source>
    </source>
</evidence>
<evidence type="ECO:0007829" key="19">
    <source>
        <dbReference type="PDB" id="2RQY"/>
    </source>
</evidence>
<evidence type="ECO:0007829" key="20">
    <source>
        <dbReference type="PDB" id="6H9U"/>
    </source>
</evidence>
<evidence type="ECO:0007829" key="21">
    <source>
        <dbReference type="PDB" id="6HA7"/>
    </source>
</evidence>
<protein>
    <recommendedName>
        <fullName evidence="13">Mesencephalic astrocyte-derived neurotrophic factor</fullName>
    </recommendedName>
    <alternativeName>
        <fullName>Arginine-rich protein</fullName>
    </alternativeName>
    <alternativeName>
        <fullName>Protein ARMET</fullName>
    </alternativeName>
</protein>
<dbReference type="EMBL" id="AK014338">
    <property type="protein sequence ID" value="BAB29281.1"/>
    <property type="molecule type" value="mRNA"/>
</dbReference>
<dbReference type="EMBL" id="AK131997">
    <property type="protein sequence ID" value="BAE20927.1"/>
    <property type="molecule type" value="mRNA"/>
</dbReference>
<dbReference type="EMBL" id="AK165646">
    <property type="protein sequence ID" value="BAE38314.1"/>
    <property type="molecule type" value="mRNA"/>
</dbReference>
<dbReference type="EMBL" id="AC147636">
    <property type="status" value="NOT_ANNOTATED_CDS"/>
    <property type="molecule type" value="Genomic_DNA"/>
</dbReference>
<dbReference type="CCDS" id="CCDS23486.1"/>
<dbReference type="RefSeq" id="NP_083379.2">
    <property type="nucleotide sequence ID" value="NM_029103.4"/>
</dbReference>
<dbReference type="PDB" id="2RQY">
    <property type="method" value="NMR"/>
    <property type="chains" value="A=22-179"/>
</dbReference>
<dbReference type="PDB" id="6H9U">
    <property type="method" value="X-ray"/>
    <property type="resolution" value="1.57 A"/>
    <property type="chains" value="B=126-169"/>
</dbReference>
<dbReference type="PDB" id="6HA7">
    <property type="method" value="X-ray"/>
    <property type="resolution" value="2.49 A"/>
    <property type="chains" value="C/D=22-179"/>
</dbReference>
<dbReference type="PDBsum" id="2RQY"/>
<dbReference type="PDBsum" id="6H9U"/>
<dbReference type="PDBsum" id="6HA7"/>
<dbReference type="SMR" id="Q9CXI5"/>
<dbReference type="FunCoup" id="Q9CXI5">
    <property type="interactions" value="1634"/>
</dbReference>
<dbReference type="STRING" id="10090.ENSMUSP00000124562"/>
<dbReference type="iPTMnet" id="Q9CXI5"/>
<dbReference type="PhosphoSitePlus" id="Q9CXI5"/>
<dbReference type="SwissPalm" id="Q9CXI5"/>
<dbReference type="jPOST" id="Q9CXI5"/>
<dbReference type="PaxDb" id="10090-ENSMUSP00000124562"/>
<dbReference type="PeptideAtlas" id="Q9CXI5"/>
<dbReference type="ProteomicsDB" id="292015"/>
<dbReference type="ProteomicsDB" id="341275"/>
<dbReference type="Pumba" id="Q9CXI5"/>
<dbReference type="TopDownProteomics" id="Q9CXI5"/>
<dbReference type="Antibodypedia" id="2505">
    <property type="antibodies" value="367 antibodies from 35 providers"/>
</dbReference>
<dbReference type="DNASU" id="74840"/>
<dbReference type="Ensembl" id="ENSMUST00000159283.8">
    <property type="protein sequence ID" value="ENSMUSP00000124562.2"/>
    <property type="gene ID" value="ENSMUSG00000032575.17"/>
</dbReference>
<dbReference type="GeneID" id="74840"/>
<dbReference type="KEGG" id="mmu:74840"/>
<dbReference type="AGR" id="MGI:1922090"/>
<dbReference type="CTD" id="7873"/>
<dbReference type="MGI" id="MGI:1922090">
    <property type="gene designation" value="Manf"/>
</dbReference>
<dbReference type="VEuPathDB" id="HostDB:ENSMUSG00000032575"/>
<dbReference type="eggNOG" id="KOG4154">
    <property type="taxonomic scope" value="Eukaryota"/>
</dbReference>
<dbReference type="GeneTree" id="ENSGT00390000007160"/>
<dbReference type="HOGENOM" id="CLU_099080_1_0_1"/>
<dbReference type="InParanoid" id="Q9CXI5"/>
<dbReference type="OMA" id="EVCKGCA"/>
<dbReference type="OrthoDB" id="5597848at2759"/>
<dbReference type="TreeFam" id="TF314252"/>
<dbReference type="Reactome" id="R-MMU-114608">
    <property type="pathway name" value="Platelet degranulation"/>
</dbReference>
<dbReference type="BioGRID-ORCS" id="74840">
    <property type="hits" value="4 hits in 80 CRISPR screens"/>
</dbReference>
<dbReference type="ChiTaRS" id="Manf">
    <property type="organism name" value="mouse"/>
</dbReference>
<dbReference type="EvolutionaryTrace" id="Q9CXI5"/>
<dbReference type="PRO" id="PR:Q9CXI5"/>
<dbReference type="Proteomes" id="UP000000589">
    <property type="component" value="Chromosome 9"/>
</dbReference>
<dbReference type="RNAct" id="Q9CXI5">
    <property type="molecule type" value="protein"/>
</dbReference>
<dbReference type="Bgee" id="ENSMUSG00000032575">
    <property type="expression patterns" value="Expressed in seminal vesicle and 264 other cell types or tissues"/>
</dbReference>
<dbReference type="GO" id="GO:0005576">
    <property type="term" value="C:extracellular region"/>
    <property type="evidence" value="ECO:0007669"/>
    <property type="project" value="UniProtKB-SubCell"/>
</dbReference>
<dbReference type="GO" id="GO:0033018">
    <property type="term" value="C:sarcoplasmic reticulum lumen"/>
    <property type="evidence" value="ECO:0007669"/>
    <property type="project" value="UniProtKB-SubCell"/>
</dbReference>
<dbReference type="GO" id="GO:0008083">
    <property type="term" value="F:growth factor activity"/>
    <property type="evidence" value="ECO:0007669"/>
    <property type="project" value="UniProtKB-KW"/>
</dbReference>
<dbReference type="GO" id="GO:0120146">
    <property type="term" value="F:sulfatide binding"/>
    <property type="evidence" value="ECO:0007669"/>
    <property type="project" value="Ensembl"/>
</dbReference>
<dbReference type="GO" id="GO:1905897">
    <property type="term" value="P:regulation of response to endoplasmic reticulum stress"/>
    <property type="evidence" value="ECO:0007669"/>
    <property type="project" value="Ensembl"/>
</dbReference>
<dbReference type="GO" id="GO:0006986">
    <property type="term" value="P:response to unfolded protein"/>
    <property type="evidence" value="ECO:0007669"/>
    <property type="project" value="UniProtKB-KW"/>
</dbReference>
<dbReference type="GO" id="GO:0002014">
    <property type="term" value="P:vasoconstriction of artery involved in ischemic response to lowering of systemic arterial blood pressure"/>
    <property type="evidence" value="ECO:0000314"/>
    <property type="project" value="MGI"/>
</dbReference>
<dbReference type="FunFam" id="1.10.225.10:FF:000003">
    <property type="entry name" value="Mesencephalic astrocyte-derived neurotrophic factor"/>
    <property type="match status" value="1"/>
</dbReference>
<dbReference type="FunFam" id="1.10.720.30:FF:000003">
    <property type="entry name" value="Mesencephalic astrocyte-derived neurotrophic factor"/>
    <property type="match status" value="1"/>
</dbReference>
<dbReference type="Gene3D" id="1.10.720.30">
    <property type="entry name" value="SAP domain"/>
    <property type="match status" value="1"/>
</dbReference>
<dbReference type="Gene3D" id="1.10.225.10">
    <property type="entry name" value="Saposin-like"/>
    <property type="match status" value="1"/>
</dbReference>
<dbReference type="InterPro" id="IPR045333">
    <property type="entry name" value="ARMET-like"/>
</dbReference>
<dbReference type="InterPro" id="IPR019345">
    <property type="entry name" value="ARMET_C"/>
</dbReference>
<dbReference type="InterPro" id="IPR045332">
    <property type="entry name" value="ARMET_N"/>
</dbReference>
<dbReference type="InterPro" id="IPR036361">
    <property type="entry name" value="SAP_dom_sf"/>
</dbReference>
<dbReference type="PANTHER" id="PTHR12990">
    <property type="entry name" value="ARMET-LIKE PROTEIN"/>
    <property type="match status" value="1"/>
</dbReference>
<dbReference type="PANTHER" id="PTHR12990:SF10">
    <property type="entry name" value="MESENCEPHALIC ASTROCYTE-DERIVED NEUROTROPHIC FACTOR"/>
    <property type="match status" value="1"/>
</dbReference>
<dbReference type="Pfam" id="PF10208">
    <property type="entry name" value="ARMET_C"/>
    <property type="match status" value="1"/>
</dbReference>
<dbReference type="Pfam" id="PF20145">
    <property type="entry name" value="ARMET_N"/>
    <property type="match status" value="1"/>
</dbReference>
<dbReference type="SUPFAM" id="SSF68906">
    <property type="entry name" value="SAP domain"/>
    <property type="match status" value="1"/>
</dbReference>
<keyword id="KW-0002">3D-structure</keyword>
<keyword id="KW-1015">Disulfide bond</keyword>
<keyword id="KW-0256">Endoplasmic reticulum</keyword>
<keyword id="KW-0339">Growth factor</keyword>
<keyword id="KW-0446">Lipid-binding</keyword>
<keyword id="KW-0597">Phosphoprotein</keyword>
<keyword id="KW-1185">Reference proteome</keyword>
<keyword id="KW-0703">Sarcoplasmic reticulum</keyword>
<keyword id="KW-0964">Secreted</keyword>
<keyword id="KW-0732">Signal</keyword>
<keyword id="KW-0346">Stress response</keyword>
<keyword id="KW-0834">Unfolded protein response</keyword>
<gene>
    <name evidence="14" type="primary">Manf</name>
    <name type="synonym">Armet</name>
</gene>
<accession>Q9CXI5</accession>
<accession>Q3TMX5</accession>
<name>MANF_MOUSE</name>
<sequence length="179" mass="20388">MWATRGLAVALALSVLPDSRALRPGDCEVCISYLGRFYQDLKDRDVTFSPATIEEELIKFCREARGKENRLCYYIGATDDAATKIINEVSKPLAHHIPVEKICEKLKKKDSQICELKYDKQIDLSTVDLKKLRVKELKKILDDWGEMCKGCAEKSDYIRKINELMPKYAPKAASARTDL</sequence>
<reference key="1">
    <citation type="journal article" date="2005" name="Science">
        <title>The transcriptional landscape of the mammalian genome.</title>
        <authorList>
            <person name="Carninci P."/>
            <person name="Kasukawa T."/>
            <person name="Katayama S."/>
            <person name="Gough J."/>
            <person name="Frith M.C."/>
            <person name="Maeda N."/>
            <person name="Oyama R."/>
            <person name="Ravasi T."/>
            <person name="Lenhard B."/>
            <person name="Wells C."/>
            <person name="Kodzius R."/>
            <person name="Shimokawa K."/>
            <person name="Bajic V.B."/>
            <person name="Brenner S.E."/>
            <person name="Batalov S."/>
            <person name="Forrest A.R."/>
            <person name="Zavolan M."/>
            <person name="Davis M.J."/>
            <person name="Wilming L.G."/>
            <person name="Aidinis V."/>
            <person name="Allen J.E."/>
            <person name="Ambesi-Impiombato A."/>
            <person name="Apweiler R."/>
            <person name="Aturaliya R.N."/>
            <person name="Bailey T.L."/>
            <person name="Bansal M."/>
            <person name="Baxter L."/>
            <person name="Beisel K.W."/>
            <person name="Bersano T."/>
            <person name="Bono H."/>
            <person name="Chalk A.M."/>
            <person name="Chiu K.P."/>
            <person name="Choudhary V."/>
            <person name="Christoffels A."/>
            <person name="Clutterbuck D.R."/>
            <person name="Crowe M.L."/>
            <person name="Dalla E."/>
            <person name="Dalrymple B.P."/>
            <person name="de Bono B."/>
            <person name="Della Gatta G."/>
            <person name="di Bernardo D."/>
            <person name="Down T."/>
            <person name="Engstrom P."/>
            <person name="Fagiolini M."/>
            <person name="Faulkner G."/>
            <person name="Fletcher C.F."/>
            <person name="Fukushima T."/>
            <person name="Furuno M."/>
            <person name="Futaki S."/>
            <person name="Gariboldi M."/>
            <person name="Georgii-Hemming P."/>
            <person name="Gingeras T.R."/>
            <person name="Gojobori T."/>
            <person name="Green R.E."/>
            <person name="Gustincich S."/>
            <person name="Harbers M."/>
            <person name="Hayashi Y."/>
            <person name="Hensch T.K."/>
            <person name="Hirokawa N."/>
            <person name="Hill D."/>
            <person name="Huminiecki L."/>
            <person name="Iacono M."/>
            <person name="Ikeo K."/>
            <person name="Iwama A."/>
            <person name="Ishikawa T."/>
            <person name="Jakt M."/>
            <person name="Kanapin A."/>
            <person name="Katoh M."/>
            <person name="Kawasawa Y."/>
            <person name="Kelso J."/>
            <person name="Kitamura H."/>
            <person name="Kitano H."/>
            <person name="Kollias G."/>
            <person name="Krishnan S.P."/>
            <person name="Kruger A."/>
            <person name="Kummerfeld S.K."/>
            <person name="Kurochkin I.V."/>
            <person name="Lareau L.F."/>
            <person name="Lazarevic D."/>
            <person name="Lipovich L."/>
            <person name="Liu J."/>
            <person name="Liuni S."/>
            <person name="McWilliam S."/>
            <person name="Madan Babu M."/>
            <person name="Madera M."/>
            <person name="Marchionni L."/>
            <person name="Matsuda H."/>
            <person name="Matsuzawa S."/>
            <person name="Miki H."/>
            <person name="Mignone F."/>
            <person name="Miyake S."/>
            <person name="Morris K."/>
            <person name="Mottagui-Tabar S."/>
            <person name="Mulder N."/>
            <person name="Nakano N."/>
            <person name="Nakauchi H."/>
            <person name="Ng P."/>
            <person name="Nilsson R."/>
            <person name="Nishiguchi S."/>
            <person name="Nishikawa S."/>
            <person name="Nori F."/>
            <person name="Ohara O."/>
            <person name="Okazaki Y."/>
            <person name="Orlando V."/>
            <person name="Pang K.C."/>
            <person name="Pavan W.J."/>
            <person name="Pavesi G."/>
            <person name="Pesole G."/>
            <person name="Petrovsky N."/>
            <person name="Piazza S."/>
            <person name="Reed J."/>
            <person name="Reid J.F."/>
            <person name="Ring B.Z."/>
            <person name="Ringwald M."/>
            <person name="Rost B."/>
            <person name="Ruan Y."/>
            <person name="Salzberg S.L."/>
            <person name="Sandelin A."/>
            <person name="Schneider C."/>
            <person name="Schoenbach C."/>
            <person name="Sekiguchi K."/>
            <person name="Semple C.A."/>
            <person name="Seno S."/>
            <person name="Sessa L."/>
            <person name="Sheng Y."/>
            <person name="Shibata Y."/>
            <person name="Shimada H."/>
            <person name="Shimada K."/>
            <person name="Silva D."/>
            <person name="Sinclair B."/>
            <person name="Sperling S."/>
            <person name="Stupka E."/>
            <person name="Sugiura K."/>
            <person name="Sultana R."/>
            <person name="Takenaka Y."/>
            <person name="Taki K."/>
            <person name="Tammoja K."/>
            <person name="Tan S.L."/>
            <person name="Tang S."/>
            <person name="Taylor M.S."/>
            <person name="Tegner J."/>
            <person name="Teichmann S.A."/>
            <person name="Ueda H.R."/>
            <person name="van Nimwegen E."/>
            <person name="Verardo R."/>
            <person name="Wei C.L."/>
            <person name="Yagi K."/>
            <person name="Yamanishi H."/>
            <person name="Zabarovsky E."/>
            <person name="Zhu S."/>
            <person name="Zimmer A."/>
            <person name="Hide W."/>
            <person name="Bult C."/>
            <person name="Grimmond S.M."/>
            <person name="Teasdale R.D."/>
            <person name="Liu E.T."/>
            <person name="Brusic V."/>
            <person name="Quackenbush J."/>
            <person name="Wahlestedt C."/>
            <person name="Mattick J.S."/>
            <person name="Hume D.A."/>
            <person name="Kai C."/>
            <person name="Sasaki D."/>
            <person name="Tomaru Y."/>
            <person name="Fukuda S."/>
            <person name="Kanamori-Katayama M."/>
            <person name="Suzuki M."/>
            <person name="Aoki J."/>
            <person name="Arakawa T."/>
            <person name="Iida J."/>
            <person name="Imamura K."/>
            <person name="Itoh M."/>
            <person name="Kato T."/>
            <person name="Kawaji H."/>
            <person name="Kawagashira N."/>
            <person name="Kawashima T."/>
            <person name="Kojima M."/>
            <person name="Kondo S."/>
            <person name="Konno H."/>
            <person name="Nakano K."/>
            <person name="Ninomiya N."/>
            <person name="Nishio T."/>
            <person name="Okada M."/>
            <person name="Plessy C."/>
            <person name="Shibata K."/>
            <person name="Shiraki T."/>
            <person name="Suzuki S."/>
            <person name="Tagami M."/>
            <person name="Waki K."/>
            <person name="Watahiki A."/>
            <person name="Okamura-Oho Y."/>
            <person name="Suzuki H."/>
            <person name="Kawai J."/>
            <person name="Hayashizaki Y."/>
        </authorList>
    </citation>
    <scope>NUCLEOTIDE SEQUENCE [LARGE SCALE MRNA]</scope>
    <source>
        <strain>C57BL/6J</strain>
        <tissue>Embryonic head</tissue>
    </source>
</reference>
<reference key="2">
    <citation type="journal article" date="2009" name="PLoS Biol.">
        <title>Lineage-specific biology revealed by a finished genome assembly of the mouse.</title>
        <authorList>
            <person name="Church D.M."/>
            <person name="Goodstadt L."/>
            <person name="Hillier L.W."/>
            <person name="Zody M.C."/>
            <person name="Goldstein S."/>
            <person name="She X."/>
            <person name="Bult C.J."/>
            <person name="Agarwala R."/>
            <person name="Cherry J.L."/>
            <person name="DiCuccio M."/>
            <person name="Hlavina W."/>
            <person name="Kapustin Y."/>
            <person name="Meric P."/>
            <person name="Maglott D."/>
            <person name="Birtle Z."/>
            <person name="Marques A.C."/>
            <person name="Graves T."/>
            <person name="Zhou S."/>
            <person name="Teague B."/>
            <person name="Potamousis K."/>
            <person name="Churas C."/>
            <person name="Place M."/>
            <person name="Herschleb J."/>
            <person name="Runnheim R."/>
            <person name="Forrest D."/>
            <person name="Amos-Landgraf J."/>
            <person name="Schwartz D.C."/>
            <person name="Cheng Z."/>
            <person name="Lindblad-Toh K."/>
            <person name="Eichler E.E."/>
            <person name="Ponting C.P."/>
        </authorList>
    </citation>
    <scope>NUCLEOTIDE SEQUENCE [LARGE SCALE GENOMIC DNA]</scope>
    <source>
        <strain>C57BL/6J</strain>
    </source>
</reference>
<reference key="3">
    <citation type="journal article" date="2007" name="Cell Struct. Funct.">
        <title>ARMET is a soluble ER protein induced by the unfolded protein response via ERSE-II element.</title>
        <authorList>
            <person name="Mizobuchi N."/>
            <person name="Hoseki J."/>
            <person name="Kubota H."/>
            <person name="Toyokuni S."/>
            <person name="Nozaki J."/>
            <person name="Naitoh M."/>
            <person name="Koizumi A."/>
            <person name="Nagata K."/>
        </authorList>
    </citation>
    <scope>SUBCELLULAR LOCATION</scope>
    <scope>TISSUE SPECIFICITY</scope>
    <scope>INDUCTION</scope>
</reference>
<reference key="4">
    <citation type="journal article" date="2008" name="J. Proteome Res.">
        <title>Large-scale identification and evolution indexing of tyrosine phosphorylation sites from murine brain.</title>
        <authorList>
            <person name="Ballif B.A."/>
            <person name="Carey G.R."/>
            <person name="Sunyaev S.R."/>
            <person name="Gygi S.P."/>
        </authorList>
    </citation>
    <scope>PHOSPHORYLATION [LARGE SCALE ANALYSIS] AT TYR-73</scope>
    <scope>IDENTIFICATION BY MASS SPECTROMETRY [LARGE SCALE ANALYSIS]</scope>
    <source>
        <tissue>Brain</tissue>
    </source>
</reference>
<reference key="5">
    <citation type="journal article" date="2010" name="Cell">
        <title>A tissue-specific atlas of mouse protein phosphorylation and expression.</title>
        <authorList>
            <person name="Huttlin E.L."/>
            <person name="Jedrychowski M.P."/>
            <person name="Elias J.E."/>
            <person name="Goswami T."/>
            <person name="Rad R."/>
            <person name="Beausoleil S.A."/>
            <person name="Villen J."/>
            <person name="Haas W."/>
            <person name="Sowa M.E."/>
            <person name="Gygi S.P."/>
        </authorList>
    </citation>
    <scope>IDENTIFICATION BY MASS SPECTROMETRY [LARGE SCALE ANALYSIS]</scope>
    <source>
        <tissue>Brain</tissue>
        <tissue>Brown adipose tissue</tissue>
        <tissue>Heart</tissue>
        <tissue>Kidney</tissue>
        <tissue>Liver</tissue>
        <tissue>Lung</tissue>
        <tissue>Pancreas</tissue>
        <tissue>Spleen</tissue>
        <tissue>Testis</tissue>
    </source>
</reference>
<reference key="6">
    <citation type="journal article" date="2013" name="Hum. Mol. Genet.">
        <title>Armet/Manf and Creld2 are components of a specialized ER stress response provoked by inappropriate formation of disulphide bonds: implications for genetic skeletal diseases.</title>
        <authorList>
            <person name="Hartley C.L."/>
            <person name="Edwards S."/>
            <person name="Mullan L."/>
            <person name="Bell P.A."/>
            <person name="Fresquet M."/>
            <person name="Boot-Handford R.P."/>
            <person name="Briggs M.D."/>
        </authorList>
    </citation>
    <scope>IDENTIFICATION IN COMPLEX WITH CRELD2; MATN3 AND PDIA4</scope>
    <scope>SUBCELLULAR LOCATION</scope>
    <scope>TISSUE SPECIFICITY</scope>
    <scope>DEVELOPMENTAL STAGE</scope>
</reference>
<reference key="7">
    <citation type="journal article" date="2019" name="Cell Stress Chaperones">
        <title>Mesencephalic astrocyte-derived neurotropic factor is an important factor in chondrocyte ER homeostasis.</title>
        <authorList>
            <person name="Bell P.A."/>
            <person name="Dennis E.P."/>
            <person name="Hartley C.L."/>
            <person name="Jackson R.M."/>
            <person name="Porter A."/>
            <person name="Boot-Handford R.P."/>
            <person name="Pirog K.A."/>
            <person name="Briggs M.D."/>
        </authorList>
    </citation>
    <scope>FUNCTION</scope>
    <scope>TISSUE SPECIFICITY</scope>
    <scope>DISRUPTION PHENOTYPE</scope>
</reference>
<reference key="8">
    <citation type="journal article" date="2021" name="Inflammation">
        <title>Mono-macrophage-Derived MANF Alleviates Bacterial Myocarditis by Inhibiting NF-kappaB Activation and Myocardial Inflammation.</title>
        <authorList>
            <person name="Wang C."/>
            <person name="Bao Q."/>
            <person name="Hou C."/>
            <person name="Sun M."/>
            <person name="Song X."/>
            <person name="Cao S."/>
            <person name="Wang X."/>
            <person name="Shen Q."/>
            <person name="Zhao Y."/>
            <person name="Wang D."/>
        </authorList>
    </citation>
    <scope>FUNCTION</scope>
    <scope>DISRUPTION PHENOTYPE</scope>
</reference>
<reference key="9">
    <citation type="journal article" date="2023" name="Cell Rep.">
        <title>MANF regulates neuronal survival and UPR through its ER-located receptor IRE1alpha.</title>
        <authorList>
            <person name="Kovaleva V."/>
            <person name="Yu L.Y."/>
            <person name="Ivanova L."/>
            <person name="Shpironok O."/>
            <person name="Nam J."/>
            <person name="Eesmaa A."/>
            <person name="Kumpula E.P."/>
            <person name="Sakson S."/>
            <person name="Toots U."/>
            <person name="Ustav M."/>
            <person name="Huiskonen J.T."/>
            <person name="Voutilainen M.H."/>
            <person name="Lindholm P."/>
            <person name="Karelson M."/>
            <person name="Saarma M."/>
        </authorList>
    </citation>
    <scope>SUBCELLULAR LOCATION</scope>
</reference>
<reference key="10">
    <citation type="journal article" date="2023" name="Nat. Aging">
        <title>Aging disrupts MANF-mediated immune modulation during skeletal muscle regeneration.</title>
        <authorList>
            <person name="Sousa N.S."/>
            <person name="Bras M.F."/>
            <person name="Antunes I.B."/>
            <person name="Lindholm P."/>
            <person name="Neves J."/>
            <person name="Sousa-Victor P."/>
        </authorList>
    </citation>
    <scope>FUNCTION</scope>
    <scope>TISSUE SPECIFICITY</scope>
    <scope>INDUCTION</scope>
    <scope>DISRUPTION PHENOTYPE</scope>
</reference>
<reference key="11">
    <citation type="journal article" date="2024" name="Immunobiology">
        <title>Deletion of mesencephalic astrocyte-derived neurotrophic factor delays and damages the development of white pulp in spleen.</title>
        <authorList>
            <person name="Zhou C."/>
            <person name="Han D."/>
            <person name="Fang H."/>
            <person name="Huang D."/>
            <person name="Cai H."/>
            <person name="Shen Y."/>
            <person name="Shen Y."/>
            <person name="Liu J."/>
        </authorList>
    </citation>
    <scope>FUNCTION</scope>
    <scope>DISRUPTION PHENOTYPE</scope>
</reference>
<reference evidence="15" key="12">
    <citation type="journal article" date="2010" name="FEBS Lett.">
        <title>Solution structure and dynamics of mouse ARMET.</title>
        <authorList>
            <person name="Hoseki J."/>
            <person name="Sasakawa H."/>
            <person name="Yamaguchi Y."/>
            <person name="Maeda M."/>
            <person name="Kubota H."/>
            <person name="Kato K."/>
            <person name="Nagata K."/>
        </authorList>
    </citation>
    <scope>STRUCTURE BY NMR OF 22-179</scope>
    <scope>DISULFIDE BONDS</scope>
</reference>
<reference evidence="16 17" key="13">
    <citation type="journal article" date="2019" name="Nat. Commun.">
        <title>MANF antagonizes nucleotide exchange by the endoplasmic reticulum chaperone BiP.</title>
        <authorList>
            <person name="Yan Y."/>
            <person name="Rato C."/>
            <person name="Rohland L."/>
            <person name="Preissler S."/>
            <person name="Ron D."/>
        </authorList>
    </citation>
    <scope>X-RAY CRYSTALLOGRAPHY (1.57 ANGSTROMS) OF 22-179 IN COMPLEX WITH HAMSTER HSPA5</scope>
    <scope>FUNCTION</scope>
    <scope>SUBCELLULAR LOCATION</scope>
    <scope>DISULFIDE BONDS</scope>
    <scope>MUTAGENESIS OF ARG-133 AND GLU-153</scope>
</reference>
<feature type="signal peptide" evidence="1">
    <location>
        <begin position="1"/>
        <end position="21"/>
    </location>
</feature>
<feature type="chain" id="PRO_0000002306" description="Mesencephalic astrocyte-derived neurotrophic factor">
    <location>
        <begin position="22"/>
        <end position="179"/>
    </location>
</feature>
<feature type="region of interest" description="Interacts with ERN1, EIF2AK3 and ATF6" evidence="3">
    <location>
        <begin position="93"/>
        <end position="155"/>
    </location>
</feature>
<feature type="region of interest" description="Interacts with HSPA5" evidence="8">
    <location>
        <begin position="126"/>
        <end position="169"/>
    </location>
</feature>
<feature type="modified residue" description="Phosphotyrosine" evidence="18">
    <location>
        <position position="73"/>
    </location>
</feature>
<feature type="disulfide bond" evidence="5 8 15 16 17">
    <location>
        <begin position="27"/>
        <end position="114"/>
    </location>
</feature>
<feature type="disulfide bond" evidence="5 8 15 16 17">
    <location>
        <begin position="30"/>
        <end position="103"/>
    </location>
</feature>
<feature type="disulfide bond" evidence="5 8 15 16 17">
    <location>
        <begin position="61"/>
        <end position="72"/>
    </location>
</feature>
<feature type="disulfide bond" evidence="5 8 15 16 17">
    <location>
        <begin position="148"/>
        <end position="151"/>
    </location>
</feature>
<feature type="mutagenesis site" description="Abolishes inhibition of HSPA5 ATP nucleotide exchange." evidence="8">
    <original>R</original>
    <variation>E</variation>
    <location>
        <position position="133"/>
    </location>
</feature>
<feature type="mutagenesis site" description="Abolishes inhibition of HSPA5 ATP nucleotide exchange." evidence="8">
    <original>E</original>
    <variation>A</variation>
    <location>
        <position position="153"/>
    </location>
</feature>
<feature type="sequence conflict" description="In Ref. 1; BAB29281." evidence="13" ref="1">
    <original>K</original>
    <variation>N</variation>
    <location>
        <position position="120"/>
    </location>
</feature>
<feature type="turn" evidence="21">
    <location>
        <begin position="24"/>
        <end position="27"/>
    </location>
</feature>
<feature type="helix" evidence="21">
    <location>
        <begin position="28"/>
        <end position="43"/>
    </location>
</feature>
<feature type="helix" evidence="21">
    <location>
        <begin position="50"/>
        <end position="62"/>
    </location>
</feature>
<feature type="helix" evidence="21">
    <location>
        <begin position="67"/>
        <end position="74"/>
    </location>
</feature>
<feature type="turn" evidence="19">
    <location>
        <begin position="79"/>
        <end position="81"/>
    </location>
</feature>
<feature type="helix" evidence="21">
    <location>
        <begin position="87"/>
        <end position="94"/>
    </location>
</feature>
<feature type="helix" evidence="21">
    <location>
        <begin position="99"/>
        <end position="109"/>
    </location>
</feature>
<feature type="helix" evidence="21">
    <location>
        <begin position="112"/>
        <end position="115"/>
    </location>
</feature>
<feature type="turn" evidence="21">
    <location>
        <begin position="124"/>
        <end position="126"/>
    </location>
</feature>
<feature type="helix" evidence="21">
    <location>
        <begin position="129"/>
        <end position="131"/>
    </location>
</feature>
<feature type="helix" evidence="20">
    <location>
        <begin position="134"/>
        <end position="143"/>
    </location>
</feature>
<feature type="helix" evidence="20">
    <location>
        <begin position="154"/>
        <end position="164"/>
    </location>
</feature>
<feature type="helix" evidence="19">
    <location>
        <begin position="165"/>
        <end position="168"/>
    </location>
</feature>
<feature type="helix" evidence="21">
    <location>
        <begin position="170"/>
        <end position="175"/>
    </location>
</feature>